<dbReference type="EMBL" id="CP000472">
    <property type="protein sequence ID" value="ACJ27530.1"/>
    <property type="molecule type" value="Genomic_DNA"/>
</dbReference>
<dbReference type="RefSeq" id="WP_020910910.1">
    <property type="nucleotide sequence ID" value="NC_011566.1"/>
</dbReference>
<dbReference type="SMR" id="B8CIQ4"/>
<dbReference type="STRING" id="225849.swp_0714"/>
<dbReference type="KEGG" id="swp:swp_0714"/>
<dbReference type="eggNOG" id="COG0359">
    <property type="taxonomic scope" value="Bacteria"/>
</dbReference>
<dbReference type="HOGENOM" id="CLU_078938_4_1_6"/>
<dbReference type="OrthoDB" id="9788336at2"/>
<dbReference type="Proteomes" id="UP000000753">
    <property type="component" value="Chromosome"/>
</dbReference>
<dbReference type="GO" id="GO:1990904">
    <property type="term" value="C:ribonucleoprotein complex"/>
    <property type="evidence" value="ECO:0007669"/>
    <property type="project" value="UniProtKB-KW"/>
</dbReference>
<dbReference type="GO" id="GO:0005840">
    <property type="term" value="C:ribosome"/>
    <property type="evidence" value="ECO:0007669"/>
    <property type="project" value="UniProtKB-KW"/>
</dbReference>
<dbReference type="GO" id="GO:0019843">
    <property type="term" value="F:rRNA binding"/>
    <property type="evidence" value="ECO:0007669"/>
    <property type="project" value="UniProtKB-UniRule"/>
</dbReference>
<dbReference type="GO" id="GO:0003735">
    <property type="term" value="F:structural constituent of ribosome"/>
    <property type="evidence" value="ECO:0007669"/>
    <property type="project" value="InterPro"/>
</dbReference>
<dbReference type="GO" id="GO:0006412">
    <property type="term" value="P:translation"/>
    <property type="evidence" value="ECO:0007669"/>
    <property type="project" value="UniProtKB-UniRule"/>
</dbReference>
<dbReference type="FunFam" id="3.10.430.100:FF:000001">
    <property type="entry name" value="50S ribosomal protein L9"/>
    <property type="match status" value="1"/>
</dbReference>
<dbReference type="FunFam" id="3.40.5.10:FF:000001">
    <property type="entry name" value="50S ribosomal protein L9"/>
    <property type="match status" value="1"/>
</dbReference>
<dbReference type="Gene3D" id="3.10.430.100">
    <property type="entry name" value="Ribosomal protein L9, C-terminal domain"/>
    <property type="match status" value="1"/>
</dbReference>
<dbReference type="Gene3D" id="3.40.5.10">
    <property type="entry name" value="Ribosomal protein L9, N-terminal domain"/>
    <property type="match status" value="1"/>
</dbReference>
<dbReference type="HAMAP" id="MF_00503">
    <property type="entry name" value="Ribosomal_bL9"/>
    <property type="match status" value="1"/>
</dbReference>
<dbReference type="InterPro" id="IPR000244">
    <property type="entry name" value="Ribosomal_bL9"/>
</dbReference>
<dbReference type="InterPro" id="IPR009027">
    <property type="entry name" value="Ribosomal_bL9/RNase_H1_N"/>
</dbReference>
<dbReference type="InterPro" id="IPR020594">
    <property type="entry name" value="Ribosomal_bL9_bac/chp"/>
</dbReference>
<dbReference type="InterPro" id="IPR020069">
    <property type="entry name" value="Ribosomal_bL9_C"/>
</dbReference>
<dbReference type="InterPro" id="IPR036791">
    <property type="entry name" value="Ribosomal_bL9_C_sf"/>
</dbReference>
<dbReference type="InterPro" id="IPR020070">
    <property type="entry name" value="Ribosomal_bL9_N"/>
</dbReference>
<dbReference type="InterPro" id="IPR036935">
    <property type="entry name" value="Ribosomal_bL9_N_sf"/>
</dbReference>
<dbReference type="NCBIfam" id="TIGR00158">
    <property type="entry name" value="L9"/>
    <property type="match status" value="1"/>
</dbReference>
<dbReference type="PANTHER" id="PTHR21368">
    <property type="entry name" value="50S RIBOSOMAL PROTEIN L9"/>
    <property type="match status" value="1"/>
</dbReference>
<dbReference type="Pfam" id="PF03948">
    <property type="entry name" value="Ribosomal_L9_C"/>
    <property type="match status" value="1"/>
</dbReference>
<dbReference type="Pfam" id="PF01281">
    <property type="entry name" value="Ribosomal_L9_N"/>
    <property type="match status" value="1"/>
</dbReference>
<dbReference type="SUPFAM" id="SSF55658">
    <property type="entry name" value="L9 N-domain-like"/>
    <property type="match status" value="1"/>
</dbReference>
<dbReference type="SUPFAM" id="SSF55653">
    <property type="entry name" value="Ribosomal protein L9 C-domain"/>
    <property type="match status" value="1"/>
</dbReference>
<dbReference type="PROSITE" id="PS00651">
    <property type="entry name" value="RIBOSOMAL_L9"/>
    <property type="match status" value="1"/>
</dbReference>
<reference key="1">
    <citation type="journal article" date="2008" name="PLoS ONE">
        <title>Environmental adaptation: genomic analysis of the piezotolerant and psychrotolerant deep-sea iron reducing bacterium Shewanella piezotolerans WP3.</title>
        <authorList>
            <person name="Wang F."/>
            <person name="Wang J."/>
            <person name="Jian H."/>
            <person name="Zhang B."/>
            <person name="Li S."/>
            <person name="Wang F."/>
            <person name="Zeng X."/>
            <person name="Gao L."/>
            <person name="Bartlett D.H."/>
            <person name="Yu J."/>
            <person name="Hu S."/>
            <person name="Xiao X."/>
        </authorList>
    </citation>
    <scope>NUCLEOTIDE SEQUENCE [LARGE SCALE GENOMIC DNA]</scope>
    <source>
        <strain>WP3 / JCM 13877</strain>
    </source>
</reference>
<organism>
    <name type="scientific">Shewanella piezotolerans (strain WP3 / JCM 13877)</name>
    <dbReference type="NCBI Taxonomy" id="225849"/>
    <lineage>
        <taxon>Bacteria</taxon>
        <taxon>Pseudomonadati</taxon>
        <taxon>Pseudomonadota</taxon>
        <taxon>Gammaproteobacteria</taxon>
        <taxon>Alteromonadales</taxon>
        <taxon>Shewanellaceae</taxon>
        <taxon>Shewanella</taxon>
    </lineage>
</organism>
<proteinExistence type="inferred from homology"/>
<keyword id="KW-0687">Ribonucleoprotein</keyword>
<keyword id="KW-0689">Ribosomal protein</keyword>
<keyword id="KW-0694">RNA-binding</keyword>
<keyword id="KW-0699">rRNA-binding</keyword>
<feature type="chain" id="PRO_1000126971" description="Large ribosomal subunit protein bL9">
    <location>
        <begin position="1"/>
        <end position="150"/>
    </location>
</feature>
<accession>B8CIQ4</accession>
<comment type="function">
    <text evidence="1">Binds to the 23S rRNA.</text>
</comment>
<comment type="similarity">
    <text evidence="1">Belongs to the bacterial ribosomal protein bL9 family.</text>
</comment>
<sequence length="150" mass="15680">MNVILLDKIANLGNLGDQVSVKAGYARNFLLPQGKAVVANAANTEVFEARRAELEAKLAEELAAASARAEKITALEAVVIASKAGDEGKLFGSIGNRDVADAVTAAGVELAKSEVRLPLGALRNTGDFEVEVQLHTEVKAIVKLSVVAED</sequence>
<protein>
    <recommendedName>
        <fullName evidence="1">Large ribosomal subunit protein bL9</fullName>
    </recommendedName>
    <alternativeName>
        <fullName evidence="2">50S ribosomal protein L9</fullName>
    </alternativeName>
</protein>
<name>RL9_SHEPW</name>
<gene>
    <name evidence="1" type="primary">rplI</name>
    <name type="ordered locus">swp_0714</name>
</gene>
<evidence type="ECO:0000255" key="1">
    <source>
        <dbReference type="HAMAP-Rule" id="MF_00503"/>
    </source>
</evidence>
<evidence type="ECO:0000305" key="2"/>